<evidence type="ECO:0000269" key="1">
    <source>
    </source>
</evidence>
<evidence type="ECO:0000269" key="2">
    <source>
    </source>
</evidence>
<evidence type="ECO:0000303" key="3">
    <source>
    </source>
</evidence>
<evidence type="ECO:0000303" key="4">
    <source>
    </source>
</evidence>
<evidence type="ECO:0000305" key="5"/>
<evidence type="ECO:0007829" key="6">
    <source>
        <dbReference type="PDB" id="8CSS"/>
    </source>
</evidence>
<proteinExistence type="evidence at protein level"/>
<feature type="chain" id="PRO_0000087708" description="Small ribosomal subunit protein mS25">
    <location>
        <begin position="1"/>
        <end position="173"/>
    </location>
</feature>
<feature type="splice variant" id="VSP_056422" description="In isoform 3." evidence="3">
    <original>DSGEQVLVDVETKSNKEIMEHIRKILGKNEETLREEEEEKKQLSHPANF</original>
    <variation>GKPSGKRRRRKSSFLTQPTSALESTACGSASVKWKGRCPAPAWCHYPRR</variation>
    <location>
        <begin position="81"/>
        <end position="129"/>
    </location>
</feature>
<feature type="splice variant" id="VSP_056423" description="In isoform 2." evidence="3">
    <original>ETLREEEEEKKQLSHPANFGPRKYCLRECICEVEGQVPCPSLVPLPKEMRGKYKAALKADAQD</original>
    <variation>HYLAAPSKPVSSAVVPVTQEAEAGGSLEPRRLRLE</variation>
    <location>
        <begin position="111"/>
        <end position="173"/>
    </location>
</feature>
<feature type="splice variant" id="VSP_056424" description="In isoform 3." evidence="3">
    <location>
        <begin position="130"/>
        <end position="173"/>
    </location>
</feature>
<feature type="sequence variant" id="VAR_084766" description="In COXPD50; severe reduction of MRPS25 protein levels resulting in destabilization of the entire small ribosomal subunit and a decrease of mitochondrial translation rate; causes oxidative phosphorylation defects in patient cells; dbSNP:rs1192432123." evidence="2">
    <original>P</original>
    <variation>L</variation>
    <location>
        <position position="72"/>
    </location>
</feature>
<feature type="strand" evidence="6">
    <location>
        <begin position="4"/>
        <end position="6"/>
    </location>
</feature>
<feature type="helix" evidence="6">
    <location>
        <begin position="8"/>
        <end position="11"/>
    </location>
</feature>
<feature type="helix" evidence="6">
    <location>
        <begin position="13"/>
        <end position="17"/>
    </location>
</feature>
<feature type="strand" evidence="6">
    <location>
        <begin position="27"/>
        <end position="34"/>
    </location>
</feature>
<feature type="helix" evidence="6">
    <location>
        <begin position="39"/>
        <end position="41"/>
    </location>
</feature>
<feature type="helix" evidence="6">
    <location>
        <begin position="42"/>
        <end position="50"/>
    </location>
</feature>
<feature type="helix" evidence="6">
    <location>
        <begin position="52"/>
        <end position="58"/>
    </location>
</feature>
<feature type="strand" evidence="6">
    <location>
        <begin position="62"/>
        <end position="73"/>
    </location>
</feature>
<feature type="strand" evidence="6">
    <location>
        <begin position="75"/>
        <end position="80"/>
    </location>
</feature>
<feature type="strand" evidence="6">
    <location>
        <begin position="85"/>
        <end position="89"/>
    </location>
</feature>
<feature type="helix" evidence="6">
    <location>
        <begin position="95"/>
        <end position="106"/>
    </location>
</feature>
<feature type="helix" evidence="6">
    <location>
        <begin position="110"/>
        <end position="123"/>
    </location>
</feature>
<feature type="turn" evidence="6">
    <location>
        <begin position="132"/>
        <end position="134"/>
    </location>
</feature>
<feature type="strand" evidence="6">
    <location>
        <begin position="136"/>
        <end position="138"/>
    </location>
</feature>
<feature type="helix" evidence="6">
    <location>
        <begin position="140"/>
        <end position="142"/>
    </location>
</feature>
<feature type="turn" evidence="6">
    <location>
        <begin position="150"/>
        <end position="152"/>
    </location>
</feature>
<feature type="helix" evidence="6">
    <location>
        <begin position="157"/>
        <end position="159"/>
    </location>
</feature>
<feature type="helix" evidence="6">
    <location>
        <begin position="161"/>
        <end position="163"/>
    </location>
</feature>
<name>RT25_HUMAN</name>
<gene>
    <name type="primary">MRPS25</name>
    <name type="synonym">RPMS25</name>
</gene>
<dbReference type="EMBL" id="AK024702">
    <property type="protein sequence ID" value="BAB14968.1"/>
    <property type="molecule type" value="mRNA"/>
</dbReference>
<dbReference type="EMBL" id="AK024433">
    <property type="protein sequence ID" value="BAB15723.1"/>
    <property type="status" value="ALT_INIT"/>
    <property type="molecule type" value="mRNA"/>
</dbReference>
<dbReference type="EMBL" id="AK294123">
    <property type="protein sequence ID" value="BAG57456.1"/>
    <property type="molecule type" value="mRNA"/>
</dbReference>
<dbReference type="EMBL" id="AK298791">
    <property type="protein sequence ID" value="BAG60928.1"/>
    <property type="molecule type" value="mRNA"/>
</dbReference>
<dbReference type="EMBL" id="AC090954">
    <property type="status" value="NOT_ANNOTATED_CDS"/>
    <property type="molecule type" value="Genomic_DNA"/>
</dbReference>
<dbReference type="EMBL" id="BC003590">
    <property type="protein sequence ID" value="AAH03590.1"/>
    <property type="molecule type" value="mRNA"/>
</dbReference>
<dbReference type="CCDS" id="CCDS2622.1">
    <molecule id="P82663-1"/>
</dbReference>
<dbReference type="RefSeq" id="NP_071942.1">
    <molecule id="P82663-1"/>
    <property type="nucleotide sequence ID" value="NM_022497.5"/>
</dbReference>
<dbReference type="PDB" id="3J9M">
    <property type="method" value="EM"/>
    <property type="resolution" value="3.50 A"/>
    <property type="chains" value="AT=1-173"/>
</dbReference>
<dbReference type="PDB" id="6NU2">
    <property type="method" value="EM"/>
    <property type="resolution" value="3.90 A"/>
    <property type="chains" value="AT=2-163"/>
</dbReference>
<dbReference type="PDB" id="6NU3">
    <property type="method" value="EM"/>
    <property type="resolution" value="4.40 A"/>
    <property type="chains" value="AT=1-173"/>
</dbReference>
<dbReference type="PDB" id="6RW4">
    <property type="method" value="EM"/>
    <property type="resolution" value="2.97 A"/>
    <property type="chains" value="T=1-173"/>
</dbReference>
<dbReference type="PDB" id="6RW5">
    <property type="method" value="EM"/>
    <property type="resolution" value="3.14 A"/>
    <property type="chains" value="T=1-173"/>
</dbReference>
<dbReference type="PDB" id="6VLZ">
    <property type="method" value="EM"/>
    <property type="resolution" value="2.97 A"/>
    <property type="chains" value="AT=1-173"/>
</dbReference>
<dbReference type="PDB" id="6VMI">
    <property type="method" value="EM"/>
    <property type="resolution" value="2.96 A"/>
    <property type="chains" value="AT=1-173"/>
</dbReference>
<dbReference type="PDB" id="6ZM5">
    <property type="method" value="EM"/>
    <property type="resolution" value="2.89 A"/>
    <property type="chains" value="AT=1-173"/>
</dbReference>
<dbReference type="PDB" id="6ZM6">
    <property type="method" value="EM"/>
    <property type="resolution" value="2.59 A"/>
    <property type="chains" value="AT=1-173"/>
</dbReference>
<dbReference type="PDB" id="6ZS9">
    <property type="method" value="EM"/>
    <property type="resolution" value="4.00 A"/>
    <property type="chains" value="AT=1-173"/>
</dbReference>
<dbReference type="PDB" id="6ZSA">
    <property type="method" value="EM"/>
    <property type="resolution" value="4.00 A"/>
    <property type="chains" value="AT=1-173"/>
</dbReference>
<dbReference type="PDB" id="6ZSB">
    <property type="method" value="EM"/>
    <property type="resolution" value="4.50 A"/>
    <property type="chains" value="AT=1-173"/>
</dbReference>
<dbReference type="PDB" id="6ZSC">
    <property type="method" value="EM"/>
    <property type="resolution" value="3.50 A"/>
    <property type="chains" value="AT=1-173"/>
</dbReference>
<dbReference type="PDB" id="6ZSD">
    <property type="method" value="EM"/>
    <property type="resolution" value="3.70 A"/>
    <property type="chains" value="AT=1-173"/>
</dbReference>
<dbReference type="PDB" id="6ZSE">
    <property type="method" value="EM"/>
    <property type="resolution" value="5.00 A"/>
    <property type="chains" value="AT=1-164"/>
</dbReference>
<dbReference type="PDB" id="6ZSG">
    <property type="method" value="EM"/>
    <property type="resolution" value="4.00 A"/>
    <property type="chains" value="AT=1-173"/>
</dbReference>
<dbReference type="PDB" id="7A5F">
    <property type="method" value="EM"/>
    <property type="resolution" value="4.40 A"/>
    <property type="chains" value="T6=1-173"/>
</dbReference>
<dbReference type="PDB" id="7A5G">
    <property type="method" value="EM"/>
    <property type="resolution" value="4.33 A"/>
    <property type="chains" value="T6=1-173"/>
</dbReference>
<dbReference type="PDB" id="7A5I">
    <property type="method" value="EM"/>
    <property type="resolution" value="3.70 A"/>
    <property type="chains" value="T6=1-173"/>
</dbReference>
<dbReference type="PDB" id="7A5K">
    <property type="method" value="EM"/>
    <property type="resolution" value="3.70 A"/>
    <property type="chains" value="T6=1-173"/>
</dbReference>
<dbReference type="PDB" id="7L08">
    <property type="method" value="EM"/>
    <property type="resolution" value="3.49 A"/>
    <property type="chains" value="AT=1-173"/>
</dbReference>
<dbReference type="PDB" id="7OG4">
    <property type="method" value="EM"/>
    <property type="resolution" value="3.80 A"/>
    <property type="chains" value="AT=1-173"/>
</dbReference>
<dbReference type="PDB" id="7P2E">
    <property type="method" value="EM"/>
    <property type="resolution" value="2.40 A"/>
    <property type="chains" value="T=1-173"/>
</dbReference>
<dbReference type="PDB" id="7PNX">
    <property type="method" value="EM"/>
    <property type="resolution" value="2.76 A"/>
    <property type="chains" value="T=1-173"/>
</dbReference>
<dbReference type="PDB" id="7PNY">
    <property type="method" value="EM"/>
    <property type="resolution" value="3.06 A"/>
    <property type="chains" value="T=1-173"/>
</dbReference>
<dbReference type="PDB" id="7PNZ">
    <property type="method" value="EM"/>
    <property type="resolution" value="3.09 A"/>
    <property type="chains" value="T=1-173"/>
</dbReference>
<dbReference type="PDB" id="7PO0">
    <property type="method" value="EM"/>
    <property type="resolution" value="2.90 A"/>
    <property type="chains" value="T=1-173"/>
</dbReference>
<dbReference type="PDB" id="7PO1">
    <property type="method" value="EM"/>
    <property type="resolution" value="2.92 A"/>
    <property type="chains" value="T=1-173"/>
</dbReference>
<dbReference type="PDB" id="7PO2">
    <property type="method" value="EM"/>
    <property type="resolution" value="3.09 A"/>
    <property type="chains" value="T=1-173"/>
</dbReference>
<dbReference type="PDB" id="7PO3">
    <property type="method" value="EM"/>
    <property type="resolution" value="2.92 A"/>
    <property type="chains" value="T=1-173"/>
</dbReference>
<dbReference type="PDB" id="7QI4">
    <property type="method" value="EM"/>
    <property type="resolution" value="2.21 A"/>
    <property type="chains" value="AT=1-173"/>
</dbReference>
<dbReference type="PDB" id="7QI5">
    <property type="method" value="EM"/>
    <property type="resolution" value="2.63 A"/>
    <property type="chains" value="AT=1-173"/>
</dbReference>
<dbReference type="PDB" id="7QI6">
    <property type="method" value="EM"/>
    <property type="resolution" value="2.98 A"/>
    <property type="chains" value="AT=1-173"/>
</dbReference>
<dbReference type="PDB" id="8ANY">
    <property type="method" value="EM"/>
    <property type="resolution" value="2.85 A"/>
    <property type="chains" value="AT=1-173"/>
</dbReference>
<dbReference type="PDB" id="8CSP">
    <property type="method" value="EM"/>
    <property type="resolution" value="2.66 A"/>
    <property type="chains" value="T=1-173"/>
</dbReference>
<dbReference type="PDB" id="8CSQ">
    <property type="method" value="EM"/>
    <property type="resolution" value="2.54 A"/>
    <property type="chains" value="T=1-173"/>
</dbReference>
<dbReference type="PDB" id="8CSR">
    <property type="method" value="EM"/>
    <property type="resolution" value="2.54 A"/>
    <property type="chains" value="T=1-173"/>
</dbReference>
<dbReference type="PDB" id="8CSS">
    <property type="method" value="EM"/>
    <property type="resolution" value="2.36 A"/>
    <property type="chains" value="T=1-173"/>
</dbReference>
<dbReference type="PDB" id="8CST">
    <property type="method" value="EM"/>
    <property type="resolution" value="2.85 A"/>
    <property type="chains" value="T=1-173"/>
</dbReference>
<dbReference type="PDB" id="8CSU">
    <property type="method" value="EM"/>
    <property type="resolution" value="3.03 A"/>
    <property type="chains" value="T=1-173"/>
</dbReference>
<dbReference type="PDB" id="8K2A">
    <property type="method" value="EM"/>
    <property type="resolution" value="2.90 A"/>
    <property type="chains" value="Sa=1-173"/>
</dbReference>
<dbReference type="PDB" id="8OIR">
    <property type="method" value="EM"/>
    <property type="resolution" value="3.10 A"/>
    <property type="chains" value="AT=1-173"/>
</dbReference>
<dbReference type="PDB" id="8OIS">
    <property type="method" value="EM"/>
    <property type="resolution" value="3.00 A"/>
    <property type="chains" value="AT=1-173"/>
</dbReference>
<dbReference type="PDB" id="8QRK">
    <property type="method" value="EM"/>
    <property type="resolution" value="6.69 A"/>
    <property type="chains" value="T=1-173"/>
</dbReference>
<dbReference type="PDB" id="8QRL">
    <property type="method" value="EM"/>
    <property type="resolution" value="3.34 A"/>
    <property type="chains" value="T=1-173"/>
</dbReference>
<dbReference type="PDB" id="8QRM">
    <property type="method" value="EM"/>
    <property type="resolution" value="3.05 A"/>
    <property type="chains" value="T=1-173"/>
</dbReference>
<dbReference type="PDB" id="8QRN">
    <property type="method" value="EM"/>
    <property type="resolution" value="2.98 A"/>
    <property type="chains" value="T=1-173"/>
</dbReference>
<dbReference type="PDB" id="8RRI">
    <property type="method" value="EM"/>
    <property type="resolution" value="2.40 A"/>
    <property type="chains" value="AT=1-169"/>
</dbReference>
<dbReference type="PDB" id="8XT0">
    <property type="method" value="EM"/>
    <property type="resolution" value="3.20 A"/>
    <property type="chains" value="Sa=1-173"/>
</dbReference>
<dbReference type="PDB" id="8XT2">
    <property type="method" value="EM"/>
    <property type="resolution" value="3.30 A"/>
    <property type="chains" value="Sa=1-173"/>
</dbReference>
<dbReference type="PDBsum" id="3J9M"/>
<dbReference type="PDBsum" id="6NU2"/>
<dbReference type="PDBsum" id="6NU3"/>
<dbReference type="PDBsum" id="6RW4"/>
<dbReference type="PDBsum" id="6RW5"/>
<dbReference type="PDBsum" id="6VLZ"/>
<dbReference type="PDBsum" id="6VMI"/>
<dbReference type="PDBsum" id="6ZM5"/>
<dbReference type="PDBsum" id="6ZM6"/>
<dbReference type="PDBsum" id="6ZS9"/>
<dbReference type="PDBsum" id="6ZSA"/>
<dbReference type="PDBsum" id="6ZSB"/>
<dbReference type="PDBsum" id="6ZSC"/>
<dbReference type="PDBsum" id="6ZSD"/>
<dbReference type="PDBsum" id="6ZSE"/>
<dbReference type="PDBsum" id="6ZSG"/>
<dbReference type="PDBsum" id="7A5F"/>
<dbReference type="PDBsum" id="7A5G"/>
<dbReference type="PDBsum" id="7A5I"/>
<dbReference type="PDBsum" id="7A5K"/>
<dbReference type="PDBsum" id="7L08"/>
<dbReference type="PDBsum" id="7OG4"/>
<dbReference type="PDBsum" id="7P2E"/>
<dbReference type="PDBsum" id="7PNX"/>
<dbReference type="PDBsum" id="7PNY"/>
<dbReference type="PDBsum" id="7PNZ"/>
<dbReference type="PDBsum" id="7PO0"/>
<dbReference type="PDBsum" id="7PO1"/>
<dbReference type="PDBsum" id="7PO2"/>
<dbReference type="PDBsum" id="7PO3"/>
<dbReference type="PDBsum" id="7QI4"/>
<dbReference type="PDBsum" id="7QI5"/>
<dbReference type="PDBsum" id="7QI6"/>
<dbReference type="PDBsum" id="8ANY"/>
<dbReference type="PDBsum" id="8CSP"/>
<dbReference type="PDBsum" id="8CSQ"/>
<dbReference type="PDBsum" id="8CSR"/>
<dbReference type="PDBsum" id="8CSS"/>
<dbReference type="PDBsum" id="8CST"/>
<dbReference type="PDBsum" id="8CSU"/>
<dbReference type="PDBsum" id="8K2A"/>
<dbReference type="PDBsum" id="8OIR"/>
<dbReference type="PDBsum" id="8OIS"/>
<dbReference type="PDBsum" id="8QRK"/>
<dbReference type="PDBsum" id="8QRL"/>
<dbReference type="PDBsum" id="8QRM"/>
<dbReference type="PDBsum" id="8QRN"/>
<dbReference type="PDBsum" id="8RRI"/>
<dbReference type="PDBsum" id="8XT0"/>
<dbReference type="PDBsum" id="8XT2"/>
<dbReference type="EMDB" id="EMD-0514"/>
<dbReference type="EMDB" id="EMD-0515"/>
<dbReference type="EMDB" id="EMD-10021"/>
<dbReference type="EMDB" id="EMD-10022"/>
<dbReference type="EMDB" id="EMD-11278"/>
<dbReference type="EMDB" id="EMD-11279"/>
<dbReference type="EMDB" id="EMD-11390"/>
<dbReference type="EMDB" id="EMD-11391"/>
<dbReference type="EMDB" id="EMD-11392"/>
<dbReference type="EMDB" id="EMD-11393"/>
<dbReference type="EMDB" id="EMD-11394"/>
<dbReference type="EMDB" id="EMD-11395"/>
<dbReference type="EMDB" id="EMD-11397"/>
<dbReference type="EMDB" id="EMD-11641"/>
<dbReference type="EMDB" id="EMD-11642"/>
<dbReference type="EMDB" id="EMD-11644"/>
<dbReference type="EMDB" id="EMD-11646"/>
<dbReference type="EMDB" id="EMD-12877"/>
<dbReference type="EMDB" id="EMD-13170"/>
<dbReference type="EMDB" id="EMD-13555"/>
<dbReference type="EMDB" id="EMD-13556"/>
<dbReference type="EMDB" id="EMD-13557"/>
<dbReference type="EMDB" id="EMD-13558"/>
<dbReference type="EMDB" id="EMD-13559"/>
<dbReference type="EMDB" id="EMD-13560"/>
<dbReference type="EMDB" id="EMD-13561"/>
<dbReference type="EMDB" id="EMD-13980"/>
<dbReference type="EMDB" id="EMD-13981"/>
<dbReference type="EMDB" id="EMD-13982"/>
<dbReference type="EMDB" id="EMD-15544"/>
<dbReference type="EMDB" id="EMD-16897"/>
<dbReference type="EMDB" id="EMD-16898"/>
<dbReference type="EMDB" id="EMD-19460"/>
<dbReference type="EMDB" id="EMD-21233"/>
<dbReference type="EMDB" id="EMD-21242"/>
<dbReference type="EMDB" id="EMD-23096"/>
<dbReference type="EMDB" id="EMD-26966"/>
<dbReference type="EMDB" id="EMD-26967"/>
<dbReference type="EMDB" id="EMD-26968"/>
<dbReference type="EMDB" id="EMD-26969"/>
<dbReference type="EMDB" id="EMD-26970"/>
<dbReference type="EMDB" id="EMD-26971"/>
<dbReference type="EMDB" id="EMD-36836"/>
<dbReference type="EMDB" id="EMD-38632"/>
<dbReference type="EMDB" id="EMD-38634"/>
<dbReference type="SMR" id="P82663"/>
<dbReference type="BioGRID" id="122180">
    <property type="interactions" value="292"/>
</dbReference>
<dbReference type="ComplexPortal" id="CPX-5225">
    <property type="entry name" value="28S mitochondrial small ribosomal subunit"/>
</dbReference>
<dbReference type="CORUM" id="P82663"/>
<dbReference type="FunCoup" id="P82663">
    <property type="interactions" value="1691"/>
</dbReference>
<dbReference type="IntAct" id="P82663">
    <property type="interactions" value="157"/>
</dbReference>
<dbReference type="MINT" id="P82663"/>
<dbReference type="STRING" id="9606.ENSP00000253686"/>
<dbReference type="GlyGen" id="P82663">
    <property type="glycosylation" value="1 site, 1 O-linked glycan (1 site)"/>
</dbReference>
<dbReference type="iPTMnet" id="P82663"/>
<dbReference type="PhosphoSitePlus" id="P82663"/>
<dbReference type="SwissPalm" id="P82663"/>
<dbReference type="BioMuta" id="MRPS25"/>
<dbReference type="DMDM" id="13633894"/>
<dbReference type="jPOST" id="P82663"/>
<dbReference type="MassIVE" id="P82663"/>
<dbReference type="PaxDb" id="9606-ENSP00000253686"/>
<dbReference type="PeptideAtlas" id="P82663"/>
<dbReference type="ProteomicsDB" id="4046"/>
<dbReference type="ProteomicsDB" id="4871"/>
<dbReference type="ProteomicsDB" id="57710">
    <molecule id="P82663-1"/>
</dbReference>
<dbReference type="Pumba" id="P82663"/>
<dbReference type="TopDownProteomics" id="P82663-1">
    <molecule id="P82663-1"/>
</dbReference>
<dbReference type="Antibodypedia" id="26653">
    <property type="antibodies" value="264 antibodies from 28 providers"/>
</dbReference>
<dbReference type="DNASU" id="64432"/>
<dbReference type="Ensembl" id="ENST00000253686.7">
    <molecule id="P82663-1"/>
    <property type="protein sequence ID" value="ENSP00000253686.2"/>
    <property type="gene ID" value="ENSG00000131368.9"/>
</dbReference>
<dbReference type="Ensembl" id="ENST00000444840.6">
    <molecule id="P82663-3"/>
    <property type="protein sequence ID" value="ENSP00000407733.2"/>
    <property type="gene ID" value="ENSG00000131368.9"/>
</dbReference>
<dbReference type="Ensembl" id="ENST00000449354.7">
    <molecule id="P82663-2"/>
    <property type="protein sequence ID" value="ENSP00000390882.2"/>
    <property type="gene ID" value="ENSG00000131368.9"/>
</dbReference>
<dbReference type="Ensembl" id="ENST00000474866.3">
    <molecule id="P82663-1"/>
    <property type="protein sequence ID" value="ENSP00000511860.1"/>
    <property type="gene ID" value="ENSG00000131368.9"/>
</dbReference>
<dbReference type="Ensembl" id="ENST00000496484.3">
    <molecule id="P82663-1"/>
    <property type="protein sequence ID" value="ENSP00000511856.1"/>
    <property type="gene ID" value="ENSG00000131368.9"/>
</dbReference>
<dbReference type="Ensembl" id="ENST00000695334.2">
    <molecule id="P82663-1"/>
    <property type="protein sequence ID" value="ENSP00000511812.1"/>
    <property type="gene ID" value="ENSG00000131368.9"/>
</dbReference>
<dbReference type="Ensembl" id="ENST00000695376.1">
    <molecule id="P82663-1"/>
    <property type="protein sequence ID" value="ENSP00000511849.1"/>
    <property type="gene ID" value="ENSG00000131368.9"/>
</dbReference>
<dbReference type="Ensembl" id="ENST00000695379.1">
    <molecule id="P82663-1"/>
    <property type="protein sequence ID" value="ENSP00000511852.1"/>
    <property type="gene ID" value="ENSG00000131368.9"/>
</dbReference>
<dbReference type="Ensembl" id="ENST00000695380.2">
    <molecule id="P82663-1"/>
    <property type="protein sequence ID" value="ENSP00000511853.1"/>
    <property type="gene ID" value="ENSG00000131368.9"/>
</dbReference>
<dbReference type="Ensembl" id="ENST00000695382.1">
    <molecule id="P82663-1"/>
    <property type="protein sequence ID" value="ENSP00000511855.1"/>
    <property type="gene ID" value="ENSG00000131368.9"/>
</dbReference>
<dbReference type="Ensembl" id="ENST00000695386.1">
    <molecule id="P82663-1"/>
    <property type="protein sequence ID" value="ENSP00000511862.1"/>
    <property type="gene ID" value="ENSG00000131368.9"/>
</dbReference>
<dbReference type="Ensembl" id="ENST00000695387.1">
    <molecule id="P82663-1"/>
    <property type="protein sequence ID" value="ENSP00000511863.1"/>
    <property type="gene ID" value="ENSG00000131368.9"/>
</dbReference>
<dbReference type="Ensembl" id="ENST00000695391.1">
    <molecule id="P82663-1"/>
    <property type="protein sequence ID" value="ENSP00000511867.1"/>
    <property type="gene ID" value="ENSG00000131368.9"/>
</dbReference>
<dbReference type="Ensembl" id="ENST00000695392.1">
    <molecule id="P82663-1"/>
    <property type="protein sequence ID" value="ENSP00000511868.1"/>
    <property type="gene ID" value="ENSG00000131368.9"/>
</dbReference>
<dbReference type="Ensembl" id="ENST00000695394.1">
    <molecule id="P82663-1"/>
    <property type="protein sequence ID" value="ENSP00000511870.1"/>
    <property type="gene ID" value="ENSG00000131368.9"/>
</dbReference>
<dbReference type="Ensembl" id="ENST00000698782.1">
    <molecule id="P82663-1"/>
    <property type="protein sequence ID" value="ENSP00000513929.1"/>
    <property type="gene ID" value="ENSG00000131368.9"/>
</dbReference>
<dbReference type="Ensembl" id="ENST00000698783.1">
    <molecule id="P82663-1"/>
    <property type="protein sequence ID" value="ENSP00000513930.1"/>
    <property type="gene ID" value="ENSG00000131368.9"/>
</dbReference>
<dbReference type="GeneID" id="64432"/>
<dbReference type="KEGG" id="hsa:64432"/>
<dbReference type="MANE-Select" id="ENST00000253686.7">
    <property type="protein sequence ID" value="ENSP00000253686.2"/>
    <property type="RefSeq nucleotide sequence ID" value="NM_022497.5"/>
    <property type="RefSeq protein sequence ID" value="NP_071942.1"/>
</dbReference>
<dbReference type="UCSC" id="uc003bzl.4">
    <molecule id="P82663-1"/>
    <property type="organism name" value="human"/>
</dbReference>
<dbReference type="AGR" id="HGNC:14511"/>
<dbReference type="CTD" id="64432"/>
<dbReference type="DisGeNET" id="64432"/>
<dbReference type="GeneCards" id="MRPS25"/>
<dbReference type="HGNC" id="HGNC:14511">
    <property type="gene designation" value="MRPS25"/>
</dbReference>
<dbReference type="HPA" id="ENSG00000131368">
    <property type="expression patterns" value="Low tissue specificity"/>
</dbReference>
<dbReference type="MalaCards" id="MRPS25"/>
<dbReference type="MIM" id="611987">
    <property type="type" value="gene"/>
</dbReference>
<dbReference type="MIM" id="619025">
    <property type="type" value="phenotype"/>
</dbReference>
<dbReference type="neXtProt" id="NX_P82663"/>
<dbReference type="OpenTargets" id="ENSG00000131368"/>
<dbReference type="PharmGKB" id="PA31013"/>
<dbReference type="VEuPathDB" id="HostDB:ENSG00000131368"/>
<dbReference type="eggNOG" id="KOG4079">
    <property type="taxonomic scope" value="Eukaryota"/>
</dbReference>
<dbReference type="GeneTree" id="ENSGT00640000091558"/>
<dbReference type="HOGENOM" id="CLU_094727_0_0_1"/>
<dbReference type="InParanoid" id="P82663"/>
<dbReference type="OMA" id="DHKQISQ"/>
<dbReference type="OrthoDB" id="5919182at2759"/>
<dbReference type="PAN-GO" id="P82663">
    <property type="GO annotations" value="2 GO annotations based on evolutionary models"/>
</dbReference>
<dbReference type="PhylomeDB" id="P82663"/>
<dbReference type="TreeFam" id="TF300292"/>
<dbReference type="PathwayCommons" id="P82663"/>
<dbReference type="Reactome" id="R-HSA-5368286">
    <property type="pathway name" value="Mitochondrial translation initiation"/>
</dbReference>
<dbReference type="Reactome" id="R-HSA-5389840">
    <property type="pathway name" value="Mitochondrial translation elongation"/>
</dbReference>
<dbReference type="Reactome" id="R-HSA-5419276">
    <property type="pathway name" value="Mitochondrial translation termination"/>
</dbReference>
<dbReference type="SignaLink" id="P82663"/>
<dbReference type="SIGNOR" id="P82663"/>
<dbReference type="BioGRID-ORCS" id="64432">
    <property type="hits" value="425 hits in 1177 CRISPR screens"/>
</dbReference>
<dbReference type="ChiTaRS" id="MRPS25">
    <property type="organism name" value="human"/>
</dbReference>
<dbReference type="GeneWiki" id="MRPS25"/>
<dbReference type="GenomeRNAi" id="64432"/>
<dbReference type="Pharos" id="P82663">
    <property type="development level" value="Tdark"/>
</dbReference>
<dbReference type="PRO" id="PR:P82663"/>
<dbReference type="Proteomes" id="UP000005640">
    <property type="component" value="Chromosome 3"/>
</dbReference>
<dbReference type="RNAct" id="P82663">
    <property type="molecule type" value="protein"/>
</dbReference>
<dbReference type="Bgee" id="ENSG00000131368">
    <property type="expression patterns" value="Expressed in apex of heart and 183 other cell types or tissues"/>
</dbReference>
<dbReference type="ExpressionAtlas" id="P82663">
    <property type="expression patterns" value="baseline and differential"/>
</dbReference>
<dbReference type="GO" id="GO:0005743">
    <property type="term" value="C:mitochondrial inner membrane"/>
    <property type="evidence" value="ECO:0000304"/>
    <property type="project" value="Reactome"/>
</dbReference>
<dbReference type="GO" id="GO:0005763">
    <property type="term" value="C:mitochondrial small ribosomal subunit"/>
    <property type="evidence" value="ECO:0000303"/>
    <property type="project" value="ComplexPortal"/>
</dbReference>
<dbReference type="GO" id="GO:0005739">
    <property type="term" value="C:mitochondrion"/>
    <property type="evidence" value="ECO:0000314"/>
    <property type="project" value="HPA"/>
</dbReference>
<dbReference type="GO" id="GO:0003735">
    <property type="term" value="F:structural constituent of ribosome"/>
    <property type="evidence" value="ECO:0000318"/>
    <property type="project" value="GO_Central"/>
</dbReference>
<dbReference type="GO" id="GO:0032543">
    <property type="term" value="P:mitochondrial translation"/>
    <property type="evidence" value="ECO:0000303"/>
    <property type="project" value="ComplexPortal"/>
</dbReference>
<dbReference type="FunFam" id="3.40.30.10:FF:000103">
    <property type="entry name" value="28S ribosomal protein S25, mitochondrial"/>
    <property type="match status" value="1"/>
</dbReference>
<dbReference type="Gene3D" id="3.40.30.10">
    <property type="entry name" value="Glutaredoxin"/>
    <property type="match status" value="1"/>
</dbReference>
<dbReference type="InterPro" id="IPR007741">
    <property type="entry name" value="Ribosomal_mL43/mS25/NADH_DH"/>
</dbReference>
<dbReference type="InterPro" id="IPR040049">
    <property type="entry name" value="Ribosomal_mS25/mL61"/>
</dbReference>
<dbReference type="InterPro" id="IPR036249">
    <property type="entry name" value="Thioredoxin-like_sf"/>
</dbReference>
<dbReference type="PANTHER" id="PTHR13274">
    <property type="entry name" value="MITOCHONDRIAL RIBOSOMAL PROTEIN S25"/>
    <property type="match status" value="1"/>
</dbReference>
<dbReference type="PANTHER" id="PTHR13274:SF2">
    <property type="entry name" value="SMALL RIBOSOMAL SUBUNIT PROTEIN MS25"/>
    <property type="match status" value="1"/>
</dbReference>
<dbReference type="Pfam" id="PF05047">
    <property type="entry name" value="L51_S25_CI-B8"/>
    <property type="match status" value="1"/>
</dbReference>
<dbReference type="SMART" id="SM00916">
    <property type="entry name" value="L51_S25_CI-B8"/>
    <property type="match status" value="1"/>
</dbReference>
<dbReference type="SUPFAM" id="SSF52833">
    <property type="entry name" value="Thioredoxin-like"/>
    <property type="match status" value="1"/>
</dbReference>
<organism>
    <name type="scientific">Homo sapiens</name>
    <name type="common">Human</name>
    <dbReference type="NCBI Taxonomy" id="9606"/>
    <lineage>
        <taxon>Eukaryota</taxon>
        <taxon>Metazoa</taxon>
        <taxon>Chordata</taxon>
        <taxon>Craniata</taxon>
        <taxon>Vertebrata</taxon>
        <taxon>Euteleostomi</taxon>
        <taxon>Mammalia</taxon>
        <taxon>Eutheria</taxon>
        <taxon>Euarchontoglires</taxon>
        <taxon>Primates</taxon>
        <taxon>Haplorrhini</taxon>
        <taxon>Catarrhini</taxon>
        <taxon>Hominidae</taxon>
        <taxon>Homo</taxon>
    </lineage>
</organism>
<reference key="1">
    <citation type="journal article" date="2004" name="Nat. Genet.">
        <title>Complete sequencing and characterization of 21,243 full-length human cDNAs.</title>
        <authorList>
            <person name="Ota T."/>
            <person name="Suzuki Y."/>
            <person name="Nishikawa T."/>
            <person name="Otsuki T."/>
            <person name="Sugiyama T."/>
            <person name="Irie R."/>
            <person name="Wakamatsu A."/>
            <person name="Hayashi K."/>
            <person name="Sato H."/>
            <person name="Nagai K."/>
            <person name="Kimura K."/>
            <person name="Makita H."/>
            <person name="Sekine M."/>
            <person name="Obayashi M."/>
            <person name="Nishi T."/>
            <person name="Shibahara T."/>
            <person name="Tanaka T."/>
            <person name="Ishii S."/>
            <person name="Yamamoto J."/>
            <person name="Saito K."/>
            <person name="Kawai Y."/>
            <person name="Isono Y."/>
            <person name="Nakamura Y."/>
            <person name="Nagahari K."/>
            <person name="Murakami K."/>
            <person name="Yasuda T."/>
            <person name="Iwayanagi T."/>
            <person name="Wagatsuma M."/>
            <person name="Shiratori A."/>
            <person name="Sudo H."/>
            <person name="Hosoiri T."/>
            <person name="Kaku Y."/>
            <person name="Kodaira H."/>
            <person name="Kondo H."/>
            <person name="Sugawara M."/>
            <person name="Takahashi M."/>
            <person name="Kanda K."/>
            <person name="Yokoi T."/>
            <person name="Furuya T."/>
            <person name="Kikkawa E."/>
            <person name="Omura Y."/>
            <person name="Abe K."/>
            <person name="Kamihara K."/>
            <person name="Katsuta N."/>
            <person name="Sato K."/>
            <person name="Tanikawa M."/>
            <person name="Yamazaki M."/>
            <person name="Ninomiya K."/>
            <person name="Ishibashi T."/>
            <person name="Yamashita H."/>
            <person name="Murakawa K."/>
            <person name="Fujimori K."/>
            <person name="Tanai H."/>
            <person name="Kimata M."/>
            <person name="Watanabe M."/>
            <person name="Hiraoka S."/>
            <person name="Chiba Y."/>
            <person name="Ishida S."/>
            <person name="Ono Y."/>
            <person name="Takiguchi S."/>
            <person name="Watanabe S."/>
            <person name="Yosida M."/>
            <person name="Hotuta T."/>
            <person name="Kusano J."/>
            <person name="Kanehori K."/>
            <person name="Takahashi-Fujii A."/>
            <person name="Hara H."/>
            <person name="Tanase T.-O."/>
            <person name="Nomura Y."/>
            <person name="Togiya S."/>
            <person name="Komai F."/>
            <person name="Hara R."/>
            <person name="Takeuchi K."/>
            <person name="Arita M."/>
            <person name="Imose N."/>
            <person name="Musashino K."/>
            <person name="Yuuki H."/>
            <person name="Oshima A."/>
            <person name="Sasaki N."/>
            <person name="Aotsuka S."/>
            <person name="Yoshikawa Y."/>
            <person name="Matsunawa H."/>
            <person name="Ichihara T."/>
            <person name="Shiohata N."/>
            <person name="Sano S."/>
            <person name="Moriya S."/>
            <person name="Momiyama H."/>
            <person name="Satoh N."/>
            <person name="Takami S."/>
            <person name="Terashima Y."/>
            <person name="Suzuki O."/>
            <person name="Nakagawa S."/>
            <person name="Senoh A."/>
            <person name="Mizoguchi H."/>
            <person name="Goto Y."/>
            <person name="Shimizu F."/>
            <person name="Wakebe H."/>
            <person name="Hishigaki H."/>
            <person name="Watanabe T."/>
            <person name="Sugiyama A."/>
            <person name="Takemoto M."/>
            <person name="Kawakami B."/>
            <person name="Yamazaki M."/>
            <person name="Watanabe K."/>
            <person name="Kumagai A."/>
            <person name="Itakura S."/>
            <person name="Fukuzumi Y."/>
            <person name="Fujimori Y."/>
            <person name="Komiyama M."/>
            <person name="Tashiro H."/>
            <person name="Tanigami A."/>
            <person name="Fujiwara T."/>
            <person name="Ono T."/>
            <person name="Yamada K."/>
            <person name="Fujii Y."/>
            <person name="Ozaki K."/>
            <person name="Hirao M."/>
            <person name="Ohmori Y."/>
            <person name="Kawabata A."/>
            <person name="Hikiji T."/>
            <person name="Kobatake N."/>
            <person name="Inagaki H."/>
            <person name="Ikema Y."/>
            <person name="Okamoto S."/>
            <person name="Okitani R."/>
            <person name="Kawakami T."/>
            <person name="Noguchi S."/>
            <person name="Itoh T."/>
            <person name="Shigeta K."/>
            <person name="Senba T."/>
            <person name="Matsumura K."/>
            <person name="Nakajima Y."/>
            <person name="Mizuno T."/>
            <person name="Morinaga M."/>
            <person name="Sasaki M."/>
            <person name="Togashi T."/>
            <person name="Oyama M."/>
            <person name="Hata H."/>
            <person name="Watanabe M."/>
            <person name="Komatsu T."/>
            <person name="Mizushima-Sugano J."/>
            <person name="Satoh T."/>
            <person name="Shirai Y."/>
            <person name="Takahashi Y."/>
            <person name="Nakagawa K."/>
            <person name="Okumura K."/>
            <person name="Nagase T."/>
            <person name="Nomura N."/>
            <person name="Kikuchi H."/>
            <person name="Masuho Y."/>
            <person name="Yamashita R."/>
            <person name="Nakai K."/>
            <person name="Yada T."/>
            <person name="Nakamura Y."/>
            <person name="Ohara O."/>
            <person name="Isogai T."/>
            <person name="Sugano S."/>
        </authorList>
    </citation>
    <scope>NUCLEOTIDE SEQUENCE [LARGE SCALE MRNA] (ISOFORMS 1; 2 AND 3)</scope>
    <source>
        <tissue>Brain cortex</tissue>
    </source>
</reference>
<reference key="2">
    <citation type="journal article" date="2000" name="DNA Res.">
        <title>Characterization of long cDNA clones from human adult spleen.</title>
        <authorList>
            <person name="Hattori A."/>
            <person name="Okumura K."/>
            <person name="Nagase T."/>
            <person name="Kikuno R."/>
            <person name="Hirosawa M."/>
            <person name="Ohara O."/>
        </authorList>
    </citation>
    <scope>NUCLEOTIDE SEQUENCE [LARGE SCALE MRNA] (ISOFORM 1)</scope>
    <source>
        <tissue>Spleen</tissue>
    </source>
</reference>
<reference key="3">
    <citation type="journal article" date="2006" name="Nature">
        <title>The DNA sequence, annotation and analysis of human chromosome 3.</title>
        <authorList>
            <person name="Muzny D.M."/>
            <person name="Scherer S.E."/>
            <person name="Kaul R."/>
            <person name="Wang J."/>
            <person name="Yu J."/>
            <person name="Sudbrak R."/>
            <person name="Buhay C.J."/>
            <person name="Chen R."/>
            <person name="Cree A."/>
            <person name="Ding Y."/>
            <person name="Dugan-Rocha S."/>
            <person name="Gill R."/>
            <person name="Gunaratne P."/>
            <person name="Harris R.A."/>
            <person name="Hawes A.C."/>
            <person name="Hernandez J."/>
            <person name="Hodgson A.V."/>
            <person name="Hume J."/>
            <person name="Jackson A."/>
            <person name="Khan Z.M."/>
            <person name="Kovar-Smith C."/>
            <person name="Lewis L.R."/>
            <person name="Lozado R.J."/>
            <person name="Metzker M.L."/>
            <person name="Milosavljevic A."/>
            <person name="Miner G.R."/>
            <person name="Morgan M.B."/>
            <person name="Nazareth L.V."/>
            <person name="Scott G."/>
            <person name="Sodergren E."/>
            <person name="Song X.-Z."/>
            <person name="Steffen D."/>
            <person name="Wei S."/>
            <person name="Wheeler D.A."/>
            <person name="Wright M.W."/>
            <person name="Worley K.C."/>
            <person name="Yuan Y."/>
            <person name="Zhang Z."/>
            <person name="Adams C.Q."/>
            <person name="Ansari-Lari M.A."/>
            <person name="Ayele M."/>
            <person name="Brown M.J."/>
            <person name="Chen G."/>
            <person name="Chen Z."/>
            <person name="Clendenning J."/>
            <person name="Clerc-Blankenburg K.P."/>
            <person name="Chen R."/>
            <person name="Chen Z."/>
            <person name="Davis C."/>
            <person name="Delgado O."/>
            <person name="Dinh H.H."/>
            <person name="Dong W."/>
            <person name="Draper H."/>
            <person name="Ernst S."/>
            <person name="Fu G."/>
            <person name="Gonzalez-Garay M.L."/>
            <person name="Garcia D.K."/>
            <person name="Gillett W."/>
            <person name="Gu J."/>
            <person name="Hao B."/>
            <person name="Haugen E."/>
            <person name="Havlak P."/>
            <person name="He X."/>
            <person name="Hennig S."/>
            <person name="Hu S."/>
            <person name="Huang W."/>
            <person name="Jackson L.R."/>
            <person name="Jacob L.S."/>
            <person name="Kelly S.H."/>
            <person name="Kube M."/>
            <person name="Levy R."/>
            <person name="Li Z."/>
            <person name="Liu B."/>
            <person name="Liu J."/>
            <person name="Liu W."/>
            <person name="Lu J."/>
            <person name="Maheshwari M."/>
            <person name="Nguyen B.-V."/>
            <person name="Okwuonu G.O."/>
            <person name="Palmeiri A."/>
            <person name="Pasternak S."/>
            <person name="Perez L.M."/>
            <person name="Phelps K.A."/>
            <person name="Plopper F.J."/>
            <person name="Qiang B."/>
            <person name="Raymond C."/>
            <person name="Rodriguez R."/>
            <person name="Saenphimmachak C."/>
            <person name="Santibanez J."/>
            <person name="Shen H."/>
            <person name="Shen Y."/>
            <person name="Subramanian S."/>
            <person name="Tabor P.E."/>
            <person name="Verduzco D."/>
            <person name="Waldron L."/>
            <person name="Wang J."/>
            <person name="Wang J."/>
            <person name="Wang Q."/>
            <person name="Williams G.A."/>
            <person name="Wong G.K.-S."/>
            <person name="Yao Z."/>
            <person name="Zhang J."/>
            <person name="Zhang X."/>
            <person name="Zhao G."/>
            <person name="Zhou J."/>
            <person name="Zhou Y."/>
            <person name="Nelson D."/>
            <person name="Lehrach H."/>
            <person name="Reinhardt R."/>
            <person name="Naylor S.L."/>
            <person name="Yang H."/>
            <person name="Olson M."/>
            <person name="Weinstock G."/>
            <person name="Gibbs R.A."/>
        </authorList>
    </citation>
    <scope>NUCLEOTIDE SEQUENCE [LARGE SCALE GENOMIC DNA]</scope>
</reference>
<reference key="4">
    <citation type="journal article" date="2004" name="Genome Res.">
        <title>The status, quality, and expansion of the NIH full-length cDNA project: the Mammalian Gene Collection (MGC).</title>
        <authorList>
            <consortium name="The MGC Project Team"/>
        </authorList>
    </citation>
    <scope>NUCLEOTIDE SEQUENCE [LARGE SCALE MRNA] (ISOFORM 1)</scope>
    <source>
        <tissue>Lung</tissue>
    </source>
</reference>
<reference key="5">
    <citation type="journal article" date="2000" name="J. Biol. Chem.">
        <title>A proteomics approach to the identification of mammalian mitochondrial small subunit ribosomal proteins.</title>
        <authorList>
            <person name="Koc E.C."/>
            <person name="Burkhart W."/>
            <person name="Blackburn K."/>
            <person name="Moseley A."/>
            <person name="Koc H."/>
            <person name="Spremulli L.L."/>
        </authorList>
    </citation>
    <scope>IDENTIFICATION</scope>
</reference>
<reference key="6">
    <citation type="journal article" date="2011" name="BMC Syst. Biol.">
        <title>Initial characterization of the human central proteome.</title>
        <authorList>
            <person name="Burkard T.R."/>
            <person name="Planyavsky M."/>
            <person name="Kaupe I."/>
            <person name="Breitwieser F.P."/>
            <person name="Buerckstuemmer T."/>
            <person name="Bennett K.L."/>
            <person name="Superti-Furga G."/>
            <person name="Colinge J."/>
        </authorList>
    </citation>
    <scope>IDENTIFICATION BY MASS SPECTROMETRY [LARGE SCALE ANALYSIS]</scope>
</reference>
<reference key="7">
    <citation type="journal article" date="2015" name="Proteomics">
        <title>N-terminome analysis of the human mitochondrial proteome.</title>
        <authorList>
            <person name="Vaca Jacome A.S."/>
            <person name="Rabilloud T."/>
            <person name="Schaeffer-Reiss C."/>
            <person name="Rompais M."/>
            <person name="Ayoub D."/>
            <person name="Lane L."/>
            <person name="Bairoch A."/>
            <person name="Van Dorsselaer A."/>
            <person name="Carapito C."/>
        </authorList>
    </citation>
    <scope>IDENTIFICATION BY MASS SPECTROMETRY [LARGE SCALE ANALYSIS]</scope>
</reference>
<reference key="8">
    <citation type="journal article" date="2015" name="Science">
        <title>Ribosome. The structure of the human mitochondrial ribosome.</title>
        <authorList>
            <person name="Amunts A."/>
            <person name="Brown A."/>
            <person name="Toots J."/>
            <person name="Scheres S.H."/>
            <person name="Ramakrishnan V."/>
        </authorList>
    </citation>
    <scope>STRUCTURE BY ELECTRON MICROSCOPY (3.50 ANGSTROMS)</scope>
    <scope>SUBUNIT</scope>
    <scope>SUBCELLULAR LOCATION</scope>
</reference>
<reference key="9">
    <citation type="journal article" date="2019" name="Hum. Mol. Genet.">
        <title>MRPS25 mutations impair mitochondrial translation and cause encephalomyopathy.</title>
        <authorList>
            <person name="Bugiardini E."/>
            <person name="Mitchell A.L."/>
            <person name="Rosa I.D."/>
            <person name="Horning-Do H.T."/>
            <person name="Pitmann A.M."/>
            <person name="Poole O.V."/>
            <person name="Holton J.L."/>
            <person name="Shah S."/>
            <person name="Woodward C."/>
            <person name="Hargreaves I."/>
            <person name="Quinlivan R."/>
            <person name="Amunts A."/>
            <person name="Wiesner R.J."/>
            <person name="Houlden H."/>
            <person name="Holt I.J."/>
            <person name="Hanna M.G."/>
            <person name="Pitceathly R.D.S."/>
            <person name="Spinazzola A."/>
        </authorList>
    </citation>
    <scope>VARIANT COXPD50 LEU-72</scope>
    <scope>INVOLVEMENT IN COXPD50</scope>
    <scope>CHARACTERIZATION OF VARIANT COXPD50 LEU-72</scope>
</reference>
<protein>
    <recommendedName>
        <fullName evidence="4">Small ribosomal subunit protein mS25</fullName>
    </recommendedName>
    <alternativeName>
        <fullName>28S ribosomal protein S25, mitochondrial</fullName>
        <shortName>MRP-S25</shortName>
        <shortName>S25mt</shortName>
    </alternativeName>
</protein>
<accession>P82663</accession>
<accession>B4DFJ5</accession>
<accession>B4DQG6</accession>
<accession>Q9H7P5</accession>
<keyword id="KW-0002">3D-structure</keyword>
<keyword id="KW-0025">Alternative splicing</keyword>
<keyword id="KW-0225">Disease variant</keyword>
<keyword id="KW-0496">Mitochondrion</keyword>
<keyword id="KW-1274">Primary mitochondrial disease</keyword>
<keyword id="KW-1267">Proteomics identification</keyword>
<keyword id="KW-1185">Reference proteome</keyword>
<keyword id="KW-0687">Ribonucleoprotein</keyword>
<keyword id="KW-0689">Ribosomal protein</keyword>
<sequence>MPMKGRFPIRRTLQYLSQGNVVFKDSVKVMTVNYNTHGELGEGARKFVFFNIPQIQYKNPWVQIMMFKNMTPSPFLRFYLDSGEQVLVDVETKSNKEIMEHIRKILGKNEETLREEEEEKKQLSHPANFGPRKYCLRECICEVEGQVPCPSLVPLPKEMRGKYKAALKADAQD</sequence>
<comment type="subunit">
    <text evidence="1">Component of the mitochondrial small ribosomal subunit (mt-SSU). Mature mammalian 55S mitochondrial ribosomes consist of a small (28S) and a large (39S) subunit. The 28S small subunit contains a 12S ribosomal RNA (12S mt-rRNA) and 30 different proteins. The 39S large subunit contains a 16S rRNA (16S mt-rRNA), a copy of mitochondrial valine transfer RNA (mt-tRNA(Val)), which plays an integral structural role, and 52 different proteins.</text>
</comment>
<comment type="subcellular location">
    <subcellularLocation>
        <location evidence="1">Mitochondrion</location>
    </subcellularLocation>
</comment>
<comment type="alternative products">
    <event type="alternative splicing"/>
    <isoform>
        <id>P82663-1</id>
        <name>1</name>
        <sequence type="displayed"/>
    </isoform>
    <isoform>
        <id>P82663-2</id>
        <name>2</name>
        <sequence type="described" ref="VSP_056423"/>
    </isoform>
    <isoform>
        <id>P82663-3</id>
        <name>3</name>
        <sequence type="described" ref="VSP_056422 VSP_056424"/>
    </isoform>
</comment>
<comment type="disease" evidence="2">
    <disease id="DI-05915">
        <name>Combined oxidative phosphorylation deficiency 50</name>
        <acronym>COXPD50</acronym>
        <description>An autosomal recessive, mitochondrial encephalomyopathy characterized by intrauterine growth retardation, poor overall growth, delayed psychomotor development, hypotonia, muscle weakness, progressive loss of ambulation, and mitochondrial oxidative phosphorylation deficiency in patient tissues. Brain imaging shows partial agenesis of the corpus callosum.</description>
        <dbReference type="MIM" id="619025"/>
    </disease>
    <text>The disease may be caused by variants affecting the gene represented in this entry.</text>
</comment>
<comment type="similarity">
    <text evidence="5">Belongs to the mitochondrion-specific ribosomal protein mS25 family.</text>
</comment>
<comment type="sequence caution" evidence="5">
    <conflict type="erroneous initiation">
        <sequence resource="EMBL-CDS" id="BAB15723"/>
    </conflict>
</comment>